<evidence type="ECO:0000255" key="1">
    <source>
        <dbReference type="HAMAP-Rule" id="MF_01307"/>
    </source>
</evidence>
<evidence type="ECO:0000305" key="2"/>
<reference key="1">
    <citation type="journal article" date="1998" name="Nature">
        <title>The complete genome of the hyperthermophilic bacterium Aquifex aeolicus.</title>
        <authorList>
            <person name="Deckert G."/>
            <person name="Warren P.V."/>
            <person name="Gaasterland T."/>
            <person name="Young W.G."/>
            <person name="Lenox A.L."/>
            <person name="Graham D.E."/>
            <person name="Overbeek R."/>
            <person name="Snead M.A."/>
            <person name="Keller M."/>
            <person name="Aujay M."/>
            <person name="Huber R."/>
            <person name="Feldman R.A."/>
            <person name="Short J.M."/>
            <person name="Olsen G.J."/>
            <person name="Swanson R.V."/>
        </authorList>
    </citation>
    <scope>NUCLEOTIDE SEQUENCE [LARGE SCALE GENOMIC DNA]</scope>
    <source>
        <strain>VF5</strain>
    </source>
</reference>
<dbReference type="EMBL" id="AE000657">
    <property type="protein sequence ID" value="AAC07536.1"/>
    <property type="molecule type" value="Genomic_DNA"/>
</dbReference>
<dbReference type="PIR" id="B70442">
    <property type="entry name" value="B70442"/>
</dbReference>
<dbReference type="RefSeq" id="NP_214129.1">
    <property type="nucleotide sequence ID" value="NC_000918.1"/>
</dbReference>
<dbReference type="RefSeq" id="WP_010881066.1">
    <property type="nucleotide sequence ID" value="NC_000918.1"/>
</dbReference>
<dbReference type="SMR" id="O67563"/>
<dbReference type="FunCoup" id="O67563">
    <property type="interactions" value="533"/>
</dbReference>
<dbReference type="STRING" id="224324.aq_1645"/>
<dbReference type="EnsemblBacteria" id="AAC07536">
    <property type="protein sequence ID" value="AAC07536"/>
    <property type="gene ID" value="aq_1645"/>
</dbReference>
<dbReference type="KEGG" id="aae:aq_1645"/>
<dbReference type="PATRIC" id="fig|224324.8.peg.1269"/>
<dbReference type="eggNOG" id="COG0098">
    <property type="taxonomic scope" value="Bacteria"/>
</dbReference>
<dbReference type="HOGENOM" id="CLU_065898_2_2_0"/>
<dbReference type="InParanoid" id="O67563"/>
<dbReference type="OrthoDB" id="9809045at2"/>
<dbReference type="Proteomes" id="UP000000798">
    <property type="component" value="Chromosome"/>
</dbReference>
<dbReference type="GO" id="GO:0022627">
    <property type="term" value="C:cytosolic small ribosomal subunit"/>
    <property type="evidence" value="ECO:0000318"/>
    <property type="project" value="GO_Central"/>
</dbReference>
<dbReference type="GO" id="GO:0019843">
    <property type="term" value="F:rRNA binding"/>
    <property type="evidence" value="ECO:0007669"/>
    <property type="project" value="UniProtKB-UniRule"/>
</dbReference>
<dbReference type="GO" id="GO:0003735">
    <property type="term" value="F:structural constituent of ribosome"/>
    <property type="evidence" value="ECO:0000318"/>
    <property type="project" value="GO_Central"/>
</dbReference>
<dbReference type="GO" id="GO:0006412">
    <property type="term" value="P:translation"/>
    <property type="evidence" value="ECO:0000318"/>
    <property type="project" value="GO_Central"/>
</dbReference>
<dbReference type="FunFam" id="3.30.160.20:FF:000001">
    <property type="entry name" value="30S ribosomal protein S5"/>
    <property type="match status" value="1"/>
</dbReference>
<dbReference type="FunFam" id="3.30.230.10:FF:000002">
    <property type="entry name" value="30S ribosomal protein S5"/>
    <property type="match status" value="1"/>
</dbReference>
<dbReference type="Gene3D" id="3.30.160.20">
    <property type="match status" value="1"/>
</dbReference>
<dbReference type="Gene3D" id="3.30.230.10">
    <property type="match status" value="1"/>
</dbReference>
<dbReference type="HAMAP" id="MF_01307_B">
    <property type="entry name" value="Ribosomal_uS5_B"/>
    <property type="match status" value="1"/>
</dbReference>
<dbReference type="InterPro" id="IPR020568">
    <property type="entry name" value="Ribosomal_Su5_D2-typ_SF"/>
</dbReference>
<dbReference type="InterPro" id="IPR000851">
    <property type="entry name" value="Ribosomal_uS5"/>
</dbReference>
<dbReference type="InterPro" id="IPR005712">
    <property type="entry name" value="Ribosomal_uS5_bac-type"/>
</dbReference>
<dbReference type="InterPro" id="IPR005324">
    <property type="entry name" value="Ribosomal_uS5_C"/>
</dbReference>
<dbReference type="InterPro" id="IPR013810">
    <property type="entry name" value="Ribosomal_uS5_N"/>
</dbReference>
<dbReference type="InterPro" id="IPR018192">
    <property type="entry name" value="Ribosomal_uS5_N_CS"/>
</dbReference>
<dbReference type="InterPro" id="IPR014721">
    <property type="entry name" value="Ribsml_uS5_D2-typ_fold_subgr"/>
</dbReference>
<dbReference type="NCBIfam" id="TIGR01021">
    <property type="entry name" value="rpsE_bact"/>
    <property type="match status" value="1"/>
</dbReference>
<dbReference type="PANTHER" id="PTHR48277">
    <property type="entry name" value="MITOCHONDRIAL RIBOSOMAL PROTEIN S5"/>
    <property type="match status" value="1"/>
</dbReference>
<dbReference type="PANTHER" id="PTHR48277:SF1">
    <property type="entry name" value="MITOCHONDRIAL RIBOSOMAL PROTEIN S5"/>
    <property type="match status" value="1"/>
</dbReference>
<dbReference type="Pfam" id="PF00333">
    <property type="entry name" value="Ribosomal_S5"/>
    <property type="match status" value="1"/>
</dbReference>
<dbReference type="Pfam" id="PF03719">
    <property type="entry name" value="Ribosomal_S5_C"/>
    <property type="match status" value="1"/>
</dbReference>
<dbReference type="SUPFAM" id="SSF54768">
    <property type="entry name" value="dsRNA-binding domain-like"/>
    <property type="match status" value="1"/>
</dbReference>
<dbReference type="SUPFAM" id="SSF54211">
    <property type="entry name" value="Ribosomal protein S5 domain 2-like"/>
    <property type="match status" value="1"/>
</dbReference>
<dbReference type="PROSITE" id="PS00585">
    <property type="entry name" value="RIBOSOMAL_S5"/>
    <property type="match status" value="1"/>
</dbReference>
<dbReference type="PROSITE" id="PS50881">
    <property type="entry name" value="S5_DSRBD"/>
    <property type="match status" value="1"/>
</dbReference>
<keyword id="KW-1185">Reference proteome</keyword>
<keyword id="KW-0687">Ribonucleoprotein</keyword>
<keyword id="KW-0689">Ribosomal protein</keyword>
<keyword id="KW-0694">RNA-binding</keyword>
<keyword id="KW-0699">rRNA-binding</keyword>
<name>RS5_AQUAE</name>
<comment type="function">
    <text evidence="1">With S4 and S12 plays an important role in translational accuracy.</text>
</comment>
<comment type="function">
    <text evidence="1">Located at the back of the 30S subunit body where it stabilizes the conformation of the head with respect to the body.</text>
</comment>
<comment type="subunit">
    <text evidence="1">Part of the 30S ribosomal subunit. Contacts proteins S4 and S8.</text>
</comment>
<comment type="domain">
    <text>The N-terminal domain interacts with the head of the 30S subunit; the C-terminal domain interacts with the body and contacts protein S4. The interaction surface between S4 and S5 is involved in control of translational fidelity.</text>
</comment>
<comment type="similarity">
    <text evidence="1">Belongs to the universal ribosomal protein uS5 family.</text>
</comment>
<proteinExistence type="inferred from homology"/>
<feature type="chain" id="PRO_0000131458" description="Small ribosomal subunit protein uS5">
    <location>
        <begin position="1"/>
        <end position="208"/>
    </location>
</feature>
<feature type="domain" description="S5 DRBM" evidence="1">
    <location>
        <begin position="28"/>
        <end position="91"/>
    </location>
</feature>
<gene>
    <name evidence="1" type="primary">rpsE</name>
    <name type="ordered locus">aq_1645</name>
</gene>
<accession>O67563</accession>
<organism>
    <name type="scientific">Aquifex aeolicus (strain VF5)</name>
    <dbReference type="NCBI Taxonomy" id="224324"/>
    <lineage>
        <taxon>Bacteria</taxon>
        <taxon>Pseudomonadati</taxon>
        <taxon>Aquificota</taxon>
        <taxon>Aquificia</taxon>
        <taxon>Aquificales</taxon>
        <taxon>Aquificaceae</taxon>
        <taxon>Aquifex</taxon>
    </lineage>
</organism>
<protein>
    <recommendedName>
        <fullName evidence="1">Small ribosomal subunit protein uS5</fullName>
    </recommendedName>
    <alternativeName>
        <fullName evidence="2">30S ribosomal protein S5</fullName>
    </alternativeName>
</protein>
<sequence length="208" mass="23211">MGGKDIDRLIEERRKQQNIEEILPELQLEERLIYANRTARVTKGGRRFSFSTLVVVGDRKGHVGFGHGKAKEVTLAIAKGIEKAKKNVIRVPIVDGTVPHDVIGTFGATKIIVLPARRGTGVVAGGAAKPVFELAGYTDVLTKIIGSTNPDNVVRAVFDALLQLKTPEQIAEERGLPVEEILRRYRRYALPKMNIKHYYPWRGIYEQT</sequence>